<reference key="1">
    <citation type="journal article" date="2001" name="Proc. Natl. Acad. Sci. U.S.A.">
        <title>The complete sequence of the 1,683-kb pSymB megaplasmid from the N2-fixing endosymbiont Sinorhizobium meliloti.</title>
        <authorList>
            <person name="Finan T.M."/>
            <person name="Weidner S."/>
            <person name="Wong K."/>
            <person name="Buhrmester J."/>
            <person name="Chain P."/>
            <person name="Vorhoelter F.J."/>
            <person name="Hernandez-Lucas I."/>
            <person name="Becker A."/>
            <person name="Cowie A."/>
            <person name="Gouzy J."/>
            <person name="Golding B."/>
            <person name="Puehler A."/>
        </authorList>
    </citation>
    <scope>NUCLEOTIDE SEQUENCE [LARGE SCALE GENOMIC DNA]</scope>
    <source>
        <strain>1021</strain>
    </source>
</reference>
<reference key="2">
    <citation type="journal article" date="2001" name="Science">
        <title>The composite genome of the legume symbiont Sinorhizobium meliloti.</title>
        <authorList>
            <person name="Galibert F."/>
            <person name="Finan T.M."/>
            <person name="Long S.R."/>
            <person name="Puehler A."/>
            <person name="Abola P."/>
            <person name="Ampe F."/>
            <person name="Barloy-Hubler F."/>
            <person name="Barnett M.J."/>
            <person name="Becker A."/>
            <person name="Boistard P."/>
            <person name="Bothe G."/>
            <person name="Boutry M."/>
            <person name="Bowser L."/>
            <person name="Buhrmester J."/>
            <person name="Cadieu E."/>
            <person name="Capela D."/>
            <person name="Chain P."/>
            <person name="Cowie A."/>
            <person name="Davis R.W."/>
            <person name="Dreano S."/>
            <person name="Federspiel N.A."/>
            <person name="Fisher R.F."/>
            <person name="Gloux S."/>
            <person name="Godrie T."/>
            <person name="Goffeau A."/>
            <person name="Golding B."/>
            <person name="Gouzy J."/>
            <person name="Gurjal M."/>
            <person name="Hernandez-Lucas I."/>
            <person name="Hong A."/>
            <person name="Huizar L."/>
            <person name="Hyman R.W."/>
            <person name="Jones T."/>
            <person name="Kahn D."/>
            <person name="Kahn M.L."/>
            <person name="Kalman S."/>
            <person name="Keating D.H."/>
            <person name="Kiss E."/>
            <person name="Komp C."/>
            <person name="Lelaure V."/>
            <person name="Masuy D."/>
            <person name="Palm C."/>
            <person name="Peck M.C."/>
            <person name="Pohl T.M."/>
            <person name="Portetelle D."/>
            <person name="Purnelle B."/>
            <person name="Ramsperger U."/>
            <person name="Surzycki R."/>
            <person name="Thebault P."/>
            <person name="Vandenbol M."/>
            <person name="Vorhoelter F.J."/>
            <person name="Weidner S."/>
            <person name="Wells D.H."/>
            <person name="Wong K."/>
            <person name="Yeh K.-C."/>
            <person name="Batut J."/>
        </authorList>
    </citation>
    <scope>NUCLEOTIDE SEQUENCE [LARGE SCALE GENOMIC DNA]</scope>
    <source>
        <strain>1021</strain>
    </source>
</reference>
<reference key="3">
    <citation type="journal article" date="2014" name="Elife">
        <title>Prediction and characterization of enzymatic activities guided by sequence similarity and genome neighborhood networks.</title>
        <authorList>
            <person name="Zhao S."/>
            <person name="Sakai A."/>
            <person name="Zhang X."/>
            <person name="Vetting M.W."/>
            <person name="Kumar R."/>
            <person name="Hillerich B."/>
            <person name="San Francisco B."/>
            <person name="Solbiati J."/>
            <person name="Steves A."/>
            <person name="Brown S."/>
            <person name="Akiva E."/>
            <person name="Barber A."/>
            <person name="Seidel R.D."/>
            <person name="Babbitt P.C."/>
            <person name="Almo S.C."/>
            <person name="Gerlt J.A."/>
            <person name="Jacobson M.P."/>
        </authorList>
    </citation>
    <scope>FUNCTION</scope>
    <scope>INDUCTION</scope>
    <source>
        <strain>1021</strain>
    </source>
</reference>
<feature type="chain" id="PRO_0000432274" description="Probable 4-hydroxyproline 2-epimerase">
    <location>
        <begin position="1"/>
        <end position="333"/>
    </location>
</feature>
<feature type="active site" description="Proton acceptor" evidence="1">
    <location>
        <position position="90"/>
    </location>
</feature>
<feature type="active site" description="Proton donor" evidence="1">
    <location>
        <position position="253"/>
    </location>
</feature>
<feature type="binding site" evidence="1">
    <location>
        <begin position="91"/>
        <end position="92"/>
    </location>
    <ligand>
        <name>substrate</name>
    </ligand>
</feature>
<feature type="binding site" evidence="1">
    <location>
        <position position="223"/>
    </location>
    <ligand>
        <name>substrate</name>
    </ligand>
</feature>
<feature type="binding site" evidence="1">
    <location>
        <position position="249"/>
    </location>
    <ligand>
        <name>substrate</name>
    </ligand>
</feature>
<feature type="binding site" evidence="1">
    <location>
        <begin position="254"/>
        <end position="255"/>
    </location>
    <ligand>
        <name>substrate</name>
    </ligand>
</feature>
<organism>
    <name type="scientific">Rhizobium meliloti (strain 1021)</name>
    <name type="common">Ensifer meliloti</name>
    <name type="synonym">Sinorhizobium meliloti</name>
    <dbReference type="NCBI Taxonomy" id="266834"/>
    <lineage>
        <taxon>Bacteria</taxon>
        <taxon>Pseudomonadati</taxon>
        <taxon>Pseudomonadota</taxon>
        <taxon>Alphaproteobacteria</taxon>
        <taxon>Hyphomicrobiales</taxon>
        <taxon>Rhizobiaceae</taxon>
        <taxon>Sinorhizobium/Ensifer group</taxon>
        <taxon>Sinorhizobium</taxon>
    </lineage>
</organism>
<evidence type="ECO:0000250" key="1">
    <source>
        <dbReference type="UniProtKB" id="Q4KGU2"/>
    </source>
</evidence>
<evidence type="ECO:0000269" key="2">
    <source>
    </source>
</evidence>
<evidence type="ECO:0000303" key="3">
    <source>
    </source>
</evidence>
<evidence type="ECO:0000305" key="4"/>
<evidence type="ECO:0000305" key="5">
    <source>
    </source>
</evidence>
<evidence type="ECO:0000312" key="6">
    <source>
        <dbReference type="EMBL" id="CAC48658.1"/>
    </source>
</evidence>
<proteinExistence type="evidence at transcript level"/>
<dbReference type="EC" id="5.1.1.8" evidence="5"/>
<dbReference type="EMBL" id="AL591985">
    <property type="protein sequence ID" value="CAC48658.1"/>
    <property type="molecule type" value="Genomic_DNA"/>
</dbReference>
<dbReference type="PIR" id="B95874">
    <property type="entry name" value="B95874"/>
</dbReference>
<dbReference type="RefSeq" id="NP_436798.1">
    <property type="nucleotide sequence ID" value="NC_003078.1"/>
</dbReference>
<dbReference type="RefSeq" id="WP_010975158.1">
    <property type="nucleotide sequence ID" value="NC_003078.1"/>
</dbReference>
<dbReference type="SMR" id="Q92WS1"/>
<dbReference type="EnsemblBacteria" id="CAC48658">
    <property type="protein sequence ID" value="CAC48658"/>
    <property type="gene ID" value="SM_b20268"/>
</dbReference>
<dbReference type="KEGG" id="sme:SM_b20268"/>
<dbReference type="PATRIC" id="fig|266834.11.peg.5182"/>
<dbReference type="eggNOG" id="COG3938">
    <property type="taxonomic scope" value="Bacteria"/>
</dbReference>
<dbReference type="HOGENOM" id="CLU_036729_0_0_5"/>
<dbReference type="OrthoDB" id="181267at2"/>
<dbReference type="Proteomes" id="UP000001976">
    <property type="component" value="Plasmid pSymB"/>
</dbReference>
<dbReference type="GO" id="GO:0047580">
    <property type="term" value="F:4-hydroxyproline epimerase activity"/>
    <property type="evidence" value="ECO:0007669"/>
    <property type="project" value="UniProtKB-EC"/>
</dbReference>
<dbReference type="GO" id="GO:0050346">
    <property type="term" value="F:trans-L-3-hydroxyproline dehydratase activity"/>
    <property type="evidence" value="ECO:0007669"/>
    <property type="project" value="UniProtKB-ARBA"/>
</dbReference>
<dbReference type="FunFam" id="3.10.310.10:FF:000005">
    <property type="entry name" value="Proline racemase"/>
    <property type="match status" value="1"/>
</dbReference>
<dbReference type="Gene3D" id="3.10.310.10">
    <property type="entry name" value="Diaminopimelate Epimerase, Chain A, domain 1"/>
    <property type="match status" value="2"/>
</dbReference>
<dbReference type="InterPro" id="IPR008794">
    <property type="entry name" value="Pro_racemase_fam"/>
</dbReference>
<dbReference type="NCBIfam" id="NF010578">
    <property type="entry name" value="PRK13971.1"/>
    <property type="match status" value="1"/>
</dbReference>
<dbReference type="PANTHER" id="PTHR33442:SF5">
    <property type="entry name" value="BIFUNCTIONAL TRANS-3-HYDROXY-L-PROLINE DEHYDRATASE_2-EPIMERASE"/>
    <property type="match status" value="1"/>
</dbReference>
<dbReference type="PANTHER" id="PTHR33442">
    <property type="entry name" value="TRANS-3-HYDROXY-L-PROLINE DEHYDRATASE"/>
    <property type="match status" value="1"/>
</dbReference>
<dbReference type="Pfam" id="PF05544">
    <property type="entry name" value="Pro_racemase"/>
    <property type="match status" value="1"/>
</dbReference>
<dbReference type="PIRSF" id="PIRSF029792">
    <property type="entry name" value="Pro_racemase"/>
    <property type="match status" value="1"/>
</dbReference>
<dbReference type="SFLD" id="SFLDS00028">
    <property type="entry name" value="Proline_Racemase"/>
    <property type="match status" value="1"/>
</dbReference>
<dbReference type="SUPFAM" id="SSF54506">
    <property type="entry name" value="Diaminopimelate epimerase-like"/>
    <property type="match status" value="1"/>
</dbReference>
<sequence length="333" mass="36243">MATHTFSCIDGHTCGNPVRLVSGGGPRLEGANMLEKRAHFLKEFDWIRTGLMFEPRGHDMMSGSILYPPTRPDCDVAVLFIETSGCLPMCGHGTIGTITMGIENGLITPREPGKLSIDAPAGKVDITYRQEGRFVEEVRLTNVPSFLYAEGLAAEVEGLGEIVVDVAYGGNFYAIVEPQKNFRDMADHTAGELVGWSPKLRAALNAKYEFVHPEHPEIRGLSHIQWTGKPTQPEAHARNAVFYGEKAIDRSPCGTGTSARIAQLAAKGKLKVGDEFVHESIIGSLFKGRVEAAAKVADRDAIIPSIAGWARMTGINTIFIDDRDPFAHGFVVR</sequence>
<geneLocation type="plasmid">
    <name>pSymB</name>
    <name>megaplasmid 2</name>
</geneLocation>
<keyword id="KW-0413">Isomerase</keyword>
<keyword id="KW-0614">Plasmid</keyword>
<keyword id="KW-1185">Reference proteome</keyword>
<protein>
    <recommendedName>
        <fullName evidence="5">Probable 4-hydroxyproline 2-epimerase</fullName>
        <shortName>4Hyp 2-epimerase</shortName>
        <shortName evidence="3">4HypE</shortName>
        <ecNumber evidence="5">5.1.1.8</ecNumber>
    </recommendedName>
</protein>
<comment type="function">
    <text evidence="5">Likely catalyzes the epimerization of trans-4-hydroxy-L-proline (t4LHyp) to cis-4-hydroxy-D-proline (c4DHyp). May be involved in the degradation pathway that converts t4LHyp to alpha-ketoglutarate, which would allow R.meliloti to grow on t4LHyp as a sole carbon source.</text>
</comment>
<comment type="catalytic activity">
    <reaction evidence="5">
        <text>trans-4-hydroxy-L-proline = cis-4-hydroxy-D-proline</text>
        <dbReference type="Rhea" id="RHEA:21152"/>
        <dbReference type="ChEBI" id="CHEBI:57690"/>
        <dbReference type="ChEBI" id="CHEBI:58375"/>
        <dbReference type="EC" id="5.1.1.8"/>
    </reaction>
</comment>
<comment type="induction">
    <text evidence="2">Is slightly up-regulated when the bacterium is grown on t4LHyp or t3LHyp as sole carbon source.</text>
</comment>
<comment type="similarity">
    <text evidence="4">Belongs to the proline racemase family.</text>
</comment>
<name>4HYPE_RHIME</name>
<gene>
    <name type="ordered locus">RB0258</name>
    <name evidence="6" type="ORF">SM_b20268</name>
</gene>
<accession>Q92WS1</accession>